<comment type="function">
    <text evidence="1">Tetrapolymerization of the monopyrrole PBG into the hydroxymethylbilane pre-uroporphyrinogen in several discrete steps.</text>
</comment>
<comment type="catalytic activity">
    <reaction evidence="1">
        <text>4 porphobilinogen + H2O = hydroxymethylbilane + 4 NH4(+)</text>
        <dbReference type="Rhea" id="RHEA:13185"/>
        <dbReference type="ChEBI" id="CHEBI:15377"/>
        <dbReference type="ChEBI" id="CHEBI:28938"/>
        <dbReference type="ChEBI" id="CHEBI:57845"/>
        <dbReference type="ChEBI" id="CHEBI:58126"/>
        <dbReference type="EC" id="2.5.1.61"/>
    </reaction>
</comment>
<comment type="cofactor">
    <cofactor evidence="1">
        <name>dipyrromethane</name>
        <dbReference type="ChEBI" id="CHEBI:60342"/>
    </cofactor>
    <text evidence="1">Binds 1 dipyrromethane group covalently.</text>
</comment>
<comment type="pathway">
    <text evidence="1">Porphyrin-containing compound metabolism; protoporphyrin-IX biosynthesis; coproporphyrinogen-III from 5-aminolevulinate: step 2/4.</text>
</comment>
<comment type="subunit">
    <text evidence="1">Monomer.</text>
</comment>
<comment type="miscellaneous">
    <text evidence="1">The porphobilinogen subunits are added to the dipyrromethane group.</text>
</comment>
<comment type="similarity">
    <text evidence="1">Belongs to the HMBS family.</text>
</comment>
<feature type="chain" id="PRO_1000047742" description="Porphobilinogen deaminase">
    <location>
        <begin position="1"/>
        <end position="308"/>
    </location>
</feature>
<feature type="modified residue" description="S-(dipyrrolylmethanemethyl)cysteine" evidence="1">
    <location>
        <position position="240"/>
    </location>
</feature>
<organism>
    <name type="scientific">Campylobacter hominis (strain ATCC BAA-381 / DSM 21671 / CCUG 45161 / LMG 19568 / NCTC 13146 / CH001A)</name>
    <dbReference type="NCBI Taxonomy" id="360107"/>
    <lineage>
        <taxon>Bacteria</taxon>
        <taxon>Pseudomonadati</taxon>
        <taxon>Campylobacterota</taxon>
        <taxon>Epsilonproteobacteria</taxon>
        <taxon>Campylobacterales</taxon>
        <taxon>Campylobacteraceae</taxon>
        <taxon>Campylobacter</taxon>
    </lineage>
</organism>
<keyword id="KW-0627">Porphyrin biosynthesis</keyword>
<keyword id="KW-1185">Reference proteome</keyword>
<keyword id="KW-0808">Transferase</keyword>
<name>HEM3_CAMHC</name>
<accession>A7I1S0</accession>
<evidence type="ECO:0000255" key="1">
    <source>
        <dbReference type="HAMAP-Rule" id="MF_00260"/>
    </source>
</evidence>
<gene>
    <name evidence="1" type="primary">hemC</name>
    <name type="ordered locus">CHAB381_0899</name>
</gene>
<sequence length="308" mass="34181">MNKLRIATRGSALALWQSKYIQNLIENNTEVEVELQSMKTKGDVILDTPLAKIGGKGLFTKELEESMLRGESDLAVHSLKDVPVVFPKGLILTAISEREDVRDSFVSEKFASFNELPKGAKVGTTSLRRKMQLLIKRPDLKIISLRGNINTRLRKLKENEFDAIILASAGLKRLNLMENIKYFVPFSLDEMIPAMGQGALGIECVDKSEVIEILKFINNENSVIATTIERDFVAKLNGGCQVPIGVNAEISGDIIKVRAIVGLPDGSEFIKDKREISKADFKNFGTKLADEFISRGAIELLKRAEEMA</sequence>
<proteinExistence type="inferred from homology"/>
<protein>
    <recommendedName>
        <fullName evidence="1">Porphobilinogen deaminase</fullName>
        <shortName evidence="1">PBG</shortName>
        <ecNumber evidence="1">2.5.1.61</ecNumber>
    </recommendedName>
    <alternativeName>
        <fullName evidence="1">Hydroxymethylbilane synthase</fullName>
        <shortName evidence="1">HMBS</shortName>
    </alternativeName>
    <alternativeName>
        <fullName evidence="1">Pre-uroporphyrinogen synthase</fullName>
    </alternativeName>
</protein>
<dbReference type="EC" id="2.5.1.61" evidence="1"/>
<dbReference type="EMBL" id="CP000776">
    <property type="protein sequence ID" value="ABS51146.1"/>
    <property type="molecule type" value="Genomic_DNA"/>
</dbReference>
<dbReference type="RefSeq" id="WP_012108752.1">
    <property type="nucleotide sequence ID" value="NC_009714.1"/>
</dbReference>
<dbReference type="SMR" id="A7I1S0"/>
<dbReference type="STRING" id="360107.CHAB381_0899"/>
<dbReference type="KEGG" id="cha:CHAB381_0899"/>
<dbReference type="eggNOG" id="COG0181">
    <property type="taxonomic scope" value="Bacteria"/>
</dbReference>
<dbReference type="HOGENOM" id="CLU_019704_0_2_7"/>
<dbReference type="OrthoDB" id="9810298at2"/>
<dbReference type="UniPathway" id="UPA00251">
    <property type="reaction ID" value="UER00319"/>
</dbReference>
<dbReference type="Proteomes" id="UP000002407">
    <property type="component" value="Chromosome"/>
</dbReference>
<dbReference type="GO" id="GO:0005737">
    <property type="term" value="C:cytoplasm"/>
    <property type="evidence" value="ECO:0007669"/>
    <property type="project" value="TreeGrafter"/>
</dbReference>
<dbReference type="GO" id="GO:0004418">
    <property type="term" value="F:hydroxymethylbilane synthase activity"/>
    <property type="evidence" value="ECO:0007669"/>
    <property type="project" value="UniProtKB-UniRule"/>
</dbReference>
<dbReference type="GO" id="GO:0006782">
    <property type="term" value="P:protoporphyrinogen IX biosynthetic process"/>
    <property type="evidence" value="ECO:0007669"/>
    <property type="project" value="UniProtKB-UniRule"/>
</dbReference>
<dbReference type="CDD" id="cd13646">
    <property type="entry name" value="PBP2_EcHMBS_like"/>
    <property type="match status" value="1"/>
</dbReference>
<dbReference type="FunFam" id="3.40.190.10:FF:000004">
    <property type="entry name" value="Porphobilinogen deaminase"/>
    <property type="match status" value="1"/>
</dbReference>
<dbReference type="FunFam" id="3.40.190.10:FF:000005">
    <property type="entry name" value="Porphobilinogen deaminase"/>
    <property type="match status" value="1"/>
</dbReference>
<dbReference type="Gene3D" id="3.40.190.10">
    <property type="entry name" value="Periplasmic binding protein-like II"/>
    <property type="match status" value="2"/>
</dbReference>
<dbReference type="Gene3D" id="3.30.160.40">
    <property type="entry name" value="Porphobilinogen deaminase, C-terminal domain"/>
    <property type="match status" value="1"/>
</dbReference>
<dbReference type="HAMAP" id="MF_00260">
    <property type="entry name" value="Porphobil_deam"/>
    <property type="match status" value="1"/>
</dbReference>
<dbReference type="InterPro" id="IPR000860">
    <property type="entry name" value="HemC"/>
</dbReference>
<dbReference type="InterPro" id="IPR022419">
    <property type="entry name" value="Porphobilin_deaminase_cofac_BS"/>
</dbReference>
<dbReference type="InterPro" id="IPR022417">
    <property type="entry name" value="Porphobilin_deaminase_N"/>
</dbReference>
<dbReference type="InterPro" id="IPR022418">
    <property type="entry name" value="Porphobilinogen_deaminase_C"/>
</dbReference>
<dbReference type="InterPro" id="IPR036803">
    <property type="entry name" value="Porphobilinogen_deaminase_C_sf"/>
</dbReference>
<dbReference type="NCBIfam" id="TIGR00212">
    <property type="entry name" value="hemC"/>
    <property type="match status" value="1"/>
</dbReference>
<dbReference type="PANTHER" id="PTHR11557">
    <property type="entry name" value="PORPHOBILINOGEN DEAMINASE"/>
    <property type="match status" value="1"/>
</dbReference>
<dbReference type="PANTHER" id="PTHR11557:SF0">
    <property type="entry name" value="PORPHOBILINOGEN DEAMINASE"/>
    <property type="match status" value="1"/>
</dbReference>
<dbReference type="Pfam" id="PF01379">
    <property type="entry name" value="Porphobil_deam"/>
    <property type="match status" value="1"/>
</dbReference>
<dbReference type="Pfam" id="PF03900">
    <property type="entry name" value="Porphobil_deamC"/>
    <property type="match status" value="1"/>
</dbReference>
<dbReference type="PIRSF" id="PIRSF001438">
    <property type="entry name" value="4pyrrol_synth_OHMeBilane_synth"/>
    <property type="match status" value="1"/>
</dbReference>
<dbReference type="PRINTS" id="PR00151">
    <property type="entry name" value="PORPHBDMNASE"/>
</dbReference>
<dbReference type="SUPFAM" id="SSF53850">
    <property type="entry name" value="Periplasmic binding protein-like II"/>
    <property type="match status" value="1"/>
</dbReference>
<dbReference type="SUPFAM" id="SSF54782">
    <property type="entry name" value="Porphobilinogen deaminase (hydroxymethylbilane synthase), C-terminal domain"/>
    <property type="match status" value="1"/>
</dbReference>
<dbReference type="PROSITE" id="PS00533">
    <property type="entry name" value="PORPHOBILINOGEN_DEAM"/>
    <property type="match status" value="1"/>
</dbReference>
<reference key="1">
    <citation type="submission" date="2007-07" db="EMBL/GenBank/DDBJ databases">
        <title>Complete genome sequence of Campylobacter hominis ATCC BAA-381, a commensal isolated from the human gastrointestinal tract.</title>
        <authorList>
            <person name="Fouts D.E."/>
            <person name="Mongodin E.F."/>
            <person name="Puiu D."/>
            <person name="Sebastian Y."/>
            <person name="Miller W.G."/>
            <person name="Mandrell R.E."/>
            <person name="Nelson K.E."/>
        </authorList>
    </citation>
    <scope>NUCLEOTIDE SEQUENCE [LARGE SCALE GENOMIC DNA]</scope>
    <source>
        <strain>ATCC BAA-381 / DSM 21671 / CCUG 45161 / LMG 19568 / NCTC 13146 / CH001A</strain>
    </source>
</reference>